<proteinExistence type="inferred from homology"/>
<dbReference type="EC" id="5.4.3.8" evidence="1"/>
<dbReference type="EMBL" id="CP000507">
    <property type="protein sequence ID" value="ABL99046.1"/>
    <property type="molecule type" value="Genomic_DNA"/>
</dbReference>
<dbReference type="RefSeq" id="WP_011758956.1">
    <property type="nucleotide sequence ID" value="NC_008700.1"/>
</dbReference>
<dbReference type="SMR" id="A1S3U0"/>
<dbReference type="STRING" id="326297.Sama_0839"/>
<dbReference type="KEGG" id="saz:Sama_0839"/>
<dbReference type="eggNOG" id="COG0001">
    <property type="taxonomic scope" value="Bacteria"/>
</dbReference>
<dbReference type="HOGENOM" id="CLU_016922_1_5_6"/>
<dbReference type="OrthoDB" id="9801052at2"/>
<dbReference type="UniPathway" id="UPA00251">
    <property type="reaction ID" value="UER00317"/>
</dbReference>
<dbReference type="Proteomes" id="UP000009175">
    <property type="component" value="Chromosome"/>
</dbReference>
<dbReference type="GO" id="GO:0005737">
    <property type="term" value="C:cytoplasm"/>
    <property type="evidence" value="ECO:0007669"/>
    <property type="project" value="UniProtKB-SubCell"/>
</dbReference>
<dbReference type="GO" id="GO:0042286">
    <property type="term" value="F:glutamate-1-semialdehyde 2,1-aminomutase activity"/>
    <property type="evidence" value="ECO:0007669"/>
    <property type="project" value="UniProtKB-UniRule"/>
</dbReference>
<dbReference type="GO" id="GO:0030170">
    <property type="term" value="F:pyridoxal phosphate binding"/>
    <property type="evidence" value="ECO:0007669"/>
    <property type="project" value="InterPro"/>
</dbReference>
<dbReference type="GO" id="GO:0008483">
    <property type="term" value="F:transaminase activity"/>
    <property type="evidence" value="ECO:0007669"/>
    <property type="project" value="InterPro"/>
</dbReference>
<dbReference type="GO" id="GO:0006782">
    <property type="term" value="P:protoporphyrinogen IX biosynthetic process"/>
    <property type="evidence" value="ECO:0007669"/>
    <property type="project" value="UniProtKB-UniRule"/>
</dbReference>
<dbReference type="CDD" id="cd00610">
    <property type="entry name" value="OAT_like"/>
    <property type="match status" value="1"/>
</dbReference>
<dbReference type="FunFam" id="3.40.640.10:FF:000021">
    <property type="entry name" value="Glutamate-1-semialdehyde 2,1-aminomutase"/>
    <property type="match status" value="1"/>
</dbReference>
<dbReference type="Gene3D" id="3.90.1150.10">
    <property type="entry name" value="Aspartate Aminotransferase, domain 1"/>
    <property type="match status" value="1"/>
</dbReference>
<dbReference type="Gene3D" id="3.40.640.10">
    <property type="entry name" value="Type I PLP-dependent aspartate aminotransferase-like (Major domain)"/>
    <property type="match status" value="1"/>
</dbReference>
<dbReference type="HAMAP" id="MF_00375">
    <property type="entry name" value="HemL_aminotrans_3"/>
    <property type="match status" value="1"/>
</dbReference>
<dbReference type="InterPro" id="IPR004639">
    <property type="entry name" value="4pyrrol_synth_GluAld_NH2Trfase"/>
</dbReference>
<dbReference type="InterPro" id="IPR005814">
    <property type="entry name" value="Aminotrans_3"/>
</dbReference>
<dbReference type="InterPro" id="IPR049704">
    <property type="entry name" value="Aminotrans_3_PPA_site"/>
</dbReference>
<dbReference type="InterPro" id="IPR015424">
    <property type="entry name" value="PyrdxlP-dep_Trfase"/>
</dbReference>
<dbReference type="InterPro" id="IPR015421">
    <property type="entry name" value="PyrdxlP-dep_Trfase_major"/>
</dbReference>
<dbReference type="InterPro" id="IPR015422">
    <property type="entry name" value="PyrdxlP-dep_Trfase_small"/>
</dbReference>
<dbReference type="NCBIfam" id="TIGR00713">
    <property type="entry name" value="hemL"/>
    <property type="match status" value="1"/>
</dbReference>
<dbReference type="NCBIfam" id="NF000818">
    <property type="entry name" value="PRK00062.1"/>
    <property type="match status" value="1"/>
</dbReference>
<dbReference type="PANTHER" id="PTHR43713">
    <property type="entry name" value="GLUTAMATE-1-SEMIALDEHYDE 2,1-AMINOMUTASE"/>
    <property type="match status" value="1"/>
</dbReference>
<dbReference type="PANTHER" id="PTHR43713:SF3">
    <property type="entry name" value="GLUTAMATE-1-SEMIALDEHYDE 2,1-AMINOMUTASE 1, CHLOROPLASTIC-RELATED"/>
    <property type="match status" value="1"/>
</dbReference>
<dbReference type="Pfam" id="PF00202">
    <property type="entry name" value="Aminotran_3"/>
    <property type="match status" value="1"/>
</dbReference>
<dbReference type="SUPFAM" id="SSF53383">
    <property type="entry name" value="PLP-dependent transferases"/>
    <property type="match status" value="1"/>
</dbReference>
<dbReference type="PROSITE" id="PS00600">
    <property type="entry name" value="AA_TRANSFER_CLASS_3"/>
    <property type="match status" value="1"/>
</dbReference>
<sequence length="427" mass="45922">MTRSETLFEQAKKTIPGGVNSPVRAFNGVGGTPRFIEKADGAYIYDADGKAYIDYVGSWGPMILGHNHPSIREAVLKAVHNGLSFGAPTELEVIMAEKVIEMVPSMDQVRMVSSGTEATMSAIRLARGYTKRDKILKFEGCYHGHADCLLVKAGSGALTLGQPSSPGIPEDFAKHTLTAVYNDLESVQSFFDQYPEDIACIIIEPVAGNMNCIPPVPGFLEGLRALCDKYGALFIIDEVMTGFRVSRSGAQGHYGVTPDLTTLGKVIGGGMPVGAFGGKKDVMQYLAPAGPVYQAGTLSGNPIAMTAGLAQLDALCADGLYEELAAKTKRIAEGFKAAADKHGIPMAINYVGGMFGFFFTDEQHITRFDQVTRCNMDHFRAFYHGMLDEGVYLAPSAYEAGFLSMAHGDKEIEETLAAADRVLARMK</sequence>
<evidence type="ECO:0000255" key="1">
    <source>
        <dbReference type="HAMAP-Rule" id="MF_00375"/>
    </source>
</evidence>
<gene>
    <name evidence="1" type="primary">hemL</name>
    <name type="ordered locus">Sama_0839</name>
</gene>
<keyword id="KW-0963">Cytoplasm</keyword>
<keyword id="KW-0413">Isomerase</keyword>
<keyword id="KW-0627">Porphyrin biosynthesis</keyword>
<keyword id="KW-0663">Pyridoxal phosphate</keyword>
<keyword id="KW-1185">Reference proteome</keyword>
<reference key="1">
    <citation type="submission" date="2006-12" db="EMBL/GenBank/DDBJ databases">
        <title>Complete sequence of Shewanella amazonensis SB2B.</title>
        <authorList>
            <consortium name="US DOE Joint Genome Institute"/>
            <person name="Copeland A."/>
            <person name="Lucas S."/>
            <person name="Lapidus A."/>
            <person name="Barry K."/>
            <person name="Detter J.C."/>
            <person name="Glavina del Rio T."/>
            <person name="Hammon N."/>
            <person name="Israni S."/>
            <person name="Dalin E."/>
            <person name="Tice H."/>
            <person name="Pitluck S."/>
            <person name="Munk A.C."/>
            <person name="Brettin T."/>
            <person name="Bruce D."/>
            <person name="Han C."/>
            <person name="Tapia R."/>
            <person name="Gilna P."/>
            <person name="Schmutz J."/>
            <person name="Larimer F."/>
            <person name="Land M."/>
            <person name="Hauser L."/>
            <person name="Kyrpides N."/>
            <person name="Mikhailova N."/>
            <person name="Fredrickson J."/>
            <person name="Richardson P."/>
        </authorList>
    </citation>
    <scope>NUCLEOTIDE SEQUENCE [LARGE SCALE GENOMIC DNA]</scope>
    <source>
        <strain>ATCC BAA-1098 / SB2B</strain>
    </source>
</reference>
<comment type="catalytic activity">
    <reaction evidence="1">
        <text>(S)-4-amino-5-oxopentanoate = 5-aminolevulinate</text>
        <dbReference type="Rhea" id="RHEA:14265"/>
        <dbReference type="ChEBI" id="CHEBI:57501"/>
        <dbReference type="ChEBI" id="CHEBI:356416"/>
        <dbReference type="EC" id="5.4.3.8"/>
    </reaction>
</comment>
<comment type="cofactor">
    <cofactor evidence="1">
        <name>pyridoxal 5'-phosphate</name>
        <dbReference type="ChEBI" id="CHEBI:597326"/>
    </cofactor>
</comment>
<comment type="pathway">
    <text evidence="1">Porphyrin-containing compound metabolism; protoporphyrin-IX biosynthesis; 5-aminolevulinate from L-glutamyl-tRNA(Glu): step 2/2.</text>
</comment>
<comment type="subunit">
    <text evidence="1">Homodimer.</text>
</comment>
<comment type="subcellular location">
    <subcellularLocation>
        <location evidence="1">Cytoplasm</location>
    </subcellularLocation>
</comment>
<comment type="similarity">
    <text evidence="1">Belongs to the class-III pyridoxal-phosphate-dependent aminotransferase family. HemL subfamily.</text>
</comment>
<protein>
    <recommendedName>
        <fullName evidence="1">Glutamate-1-semialdehyde 2,1-aminomutase</fullName>
        <shortName evidence="1">GSA</shortName>
        <ecNumber evidence="1">5.4.3.8</ecNumber>
    </recommendedName>
    <alternativeName>
        <fullName evidence="1">Glutamate-1-semialdehyde aminotransferase</fullName>
        <shortName evidence="1">GSA-AT</shortName>
    </alternativeName>
</protein>
<name>GSA_SHEAM</name>
<organism>
    <name type="scientific">Shewanella amazonensis (strain ATCC BAA-1098 / SB2B)</name>
    <dbReference type="NCBI Taxonomy" id="326297"/>
    <lineage>
        <taxon>Bacteria</taxon>
        <taxon>Pseudomonadati</taxon>
        <taxon>Pseudomonadota</taxon>
        <taxon>Gammaproteobacteria</taxon>
        <taxon>Alteromonadales</taxon>
        <taxon>Shewanellaceae</taxon>
        <taxon>Shewanella</taxon>
    </lineage>
</organism>
<feature type="chain" id="PRO_0000300944" description="Glutamate-1-semialdehyde 2,1-aminomutase">
    <location>
        <begin position="1"/>
        <end position="427"/>
    </location>
</feature>
<feature type="modified residue" description="N6-(pyridoxal phosphate)lysine" evidence="1">
    <location>
        <position position="265"/>
    </location>
</feature>
<accession>A1S3U0</accession>